<reference key="1">
    <citation type="submission" date="2007-02" db="EMBL/GenBank/DDBJ databases">
        <title>Complete sequence of chromosome of Yersinia pestis Pestoides F.</title>
        <authorList>
            <consortium name="US DOE Joint Genome Institute"/>
            <person name="Copeland A."/>
            <person name="Lucas S."/>
            <person name="Lapidus A."/>
            <person name="Barry K."/>
            <person name="Detter J.C."/>
            <person name="Glavina del Rio T."/>
            <person name="Hammon N."/>
            <person name="Israni S."/>
            <person name="Dalin E."/>
            <person name="Tice H."/>
            <person name="Pitluck S."/>
            <person name="Di Bartolo G."/>
            <person name="Chain P."/>
            <person name="Malfatti S."/>
            <person name="Shin M."/>
            <person name="Vergez L."/>
            <person name="Schmutz J."/>
            <person name="Larimer F."/>
            <person name="Land M."/>
            <person name="Hauser L."/>
            <person name="Worsham P."/>
            <person name="Chu M."/>
            <person name="Bearden S."/>
            <person name="Garcia E."/>
            <person name="Richardson P."/>
        </authorList>
    </citation>
    <scope>NUCLEOTIDE SEQUENCE [LARGE SCALE GENOMIC DNA]</scope>
    <source>
        <strain>Pestoides F</strain>
    </source>
</reference>
<gene>
    <name evidence="1" type="primary">gcvT</name>
    <name type="ordered locus">YPDSF_0607</name>
</gene>
<comment type="function">
    <text evidence="1">The glycine cleavage system catalyzes the degradation of glycine.</text>
</comment>
<comment type="catalytic activity">
    <reaction evidence="1">
        <text>N(6)-[(R)-S(8)-aminomethyldihydrolipoyl]-L-lysyl-[protein] + (6S)-5,6,7,8-tetrahydrofolate = N(6)-[(R)-dihydrolipoyl]-L-lysyl-[protein] + (6R)-5,10-methylene-5,6,7,8-tetrahydrofolate + NH4(+)</text>
        <dbReference type="Rhea" id="RHEA:16945"/>
        <dbReference type="Rhea" id="RHEA-COMP:10475"/>
        <dbReference type="Rhea" id="RHEA-COMP:10492"/>
        <dbReference type="ChEBI" id="CHEBI:15636"/>
        <dbReference type="ChEBI" id="CHEBI:28938"/>
        <dbReference type="ChEBI" id="CHEBI:57453"/>
        <dbReference type="ChEBI" id="CHEBI:83100"/>
        <dbReference type="ChEBI" id="CHEBI:83143"/>
        <dbReference type="EC" id="2.1.2.10"/>
    </reaction>
</comment>
<comment type="subunit">
    <text evidence="1">The glycine cleavage system is composed of four proteins: P, T, L and H.</text>
</comment>
<comment type="similarity">
    <text evidence="1">Belongs to the GcvT family.</text>
</comment>
<name>GCST_YERPP</name>
<sequence length="365" mass="40322">MAKQTPLYDQHVACGARMVDFHGWMMPLHYGSQIDEHHFVRQDAGMFDVSHMTIVDLHGNRTREFLRYLLANDVAKLTQPGKALYTGMLNESGGVIDDLIVYFLSEDYFRLVVNSATRDKDLAWISQHAEPYQVEVTVRDDLALIAVQGPQAQQKVATLLTTEQQQAIAGMKPFFGIQTGDLFIATTGYTGEAGYEIALPKQQVVAFWQQLLAAGVKPAGLGARDTLRLEAGMNLYGQEMDEKTSPLAANMGWTVAWQPEDRQFIGRAALERQRMKGTEQLVGLIMTEKGVLRNELPVYFFDAAGNQHVGVITSGSFSPTLGFSIALARVPAGIGEHAVVQIRNREMPVRVTKPGFVRAGKAIVL</sequence>
<dbReference type="EC" id="2.1.2.10" evidence="1"/>
<dbReference type="EMBL" id="CP000668">
    <property type="protein sequence ID" value="ABP39017.1"/>
    <property type="molecule type" value="Genomic_DNA"/>
</dbReference>
<dbReference type="RefSeq" id="WP_002209949.1">
    <property type="nucleotide sequence ID" value="NZ_CP009715.1"/>
</dbReference>
<dbReference type="SMR" id="A4TIA5"/>
<dbReference type="GeneID" id="57973733"/>
<dbReference type="KEGG" id="ypp:YPDSF_0607"/>
<dbReference type="PATRIC" id="fig|386656.14.peg.1926"/>
<dbReference type="GO" id="GO:0005829">
    <property type="term" value="C:cytosol"/>
    <property type="evidence" value="ECO:0007669"/>
    <property type="project" value="TreeGrafter"/>
</dbReference>
<dbReference type="GO" id="GO:0005960">
    <property type="term" value="C:glycine cleavage complex"/>
    <property type="evidence" value="ECO:0007669"/>
    <property type="project" value="InterPro"/>
</dbReference>
<dbReference type="GO" id="GO:0004047">
    <property type="term" value="F:aminomethyltransferase activity"/>
    <property type="evidence" value="ECO:0007669"/>
    <property type="project" value="UniProtKB-UniRule"/>
</dbReference>
<dbReference type="GO" id="GO:0008483">
    <property type="term" value="F:transaminase activity"/>
    <property type="evidence" value="ECO:0007669"/>
    <property type="project" value="UniProtKB-KW"/>
</dbReference>
<dbReference type="GO" id="GO:0019464">
    <property type="term" value="P:glycine decarboxylation via glycine cleavage system"/>
    <property type="evidence" value="ECO:0007669"/>
    <property type="project" value="UniProtKB-UniRule"/>
</dbReference>
<dbReference type="FunFam" id="2.40.30.110:FF:000001">
    <property type="entry name" value="Aminomethyltransferase"/>
    <property type="match status" value="1"/>
</dbReference>
<dbReference type="FunFam" id="3.30.70.1400:FF:000001">
    <property type="entry name" value="Aminomethyltransferase"/>
    <property type="match status" value="1"/>
</dbReference>
<dbReference type="FunFam" id="4.10.1250.10:FF:000001">
    <property type="entry name" value="Aminomethyltransferase"/>
    <property type="match status" value="1"/>
</dbReference>
<dbReference type="Gene3D" id="2.40.30.110">
    <property type="entry name" value="Aminomethyltransferase beta-barrel domains"/>
    <property type="match status" value="1"/>
</dbReference>
<dbReference type="Gene3D" id="3.30.70.1400">
    <property type="entry name" value="Aminomethyltransferase beta-barrel domains"/>
    <property type="match status" value="1"/>
</dbReference>
<dbReference type="Gene3D" id="4.10.1250.10">
    <property type="entry name" value="Aminomethyltransferase fragment"/>
    <property type="match status" value="1"/>
</dbReference>
<dbReference type="Gene3D" id="3.30.1360.120">
    <property type="entry name" value="Probable tRNA modification gtpase trme, domain 1"/>
    <property type="match status" value="1"/>
</dbReference>
<dbReference type="HAMAP" id="MF_00259">
    <property type="entry name" value="GcvT"/>
    <property type="match status" value="1"/>
</dbReference>
<dbReference type="InterPro" id="IPR006223">
    <property type="entry name" value="GCS_T"/>
</dbReference>
<dbReference type="InterPro" id="IPR022903">
    <property type="entry name" value="GCS_T_bac"/>
</dbReference>
<dbReference type="InterPro" id="IPR013977">
    <property type="entry name" value="GCST_C"/>
</dbReference>
<dbReference type="InterPro" id="IPR006222">
    <property type="entry name" value="GCV_T_N"/>
</dbReference>
<dbReference type="InterPro" id="IPR028896">
    <property type="entry name" value="GcvT/YgfZ/DmdA"/>
</dbReference>
<dbReference type="InterPro" id="IPR029043">
    <property type="entry name" value="GcvT/YgfZ_C"/>
</dbReference>
<dbReference type="InterPro" id="IPR027266">
    <property type="entry name" value="TrmE/GcvT_dom1"/>
</dbReference>
<dbReference type="NCBIfam" id="TIGR00528">
    <property type="entry name" value="gcvT"/>
    <property type="match status" value="1"/>
</dbReference>
<dbReference type="NCBIfam" id="NF001567">
    <property type="entry name" value="PRK00389.1"/>
    <property type="match status" value="1"/>
</dbReference>
<dbReference type="PANTHER" id="PTHR43757">
    <property type="entry name" value="AMINOMETHYLTRANSFERASE"/>
    <property type="match status" value="1"/>
</dbReference>
<dbReference type="PANTHER" id="PTHR43757:SF2">
    <property type="entry name" value="AMINOMETHYLTRANSFERASE, MITOCHONDRIAL"/>
    <property type="match status" value="1"/>
</dbReference>
<dbReference type="Pfam" id="PF01571">
    <property type="entry name" value="GCV_T"/>
    <property type="match status" value="1"/>
</dbReference>
<dbReference type="Pfam" id="PF08669">
    <property type="entry name" value="GCV_T_C"/>
    <property type="match status" value="1"/>
</dbReference>
<dbReference type="PIRSF" id="PIRSF006487">
    <property type="entry name" value="GcvT"/>
    <property type="match status" value="1"/>
</dbReference>
<dbReference type="SUPFAM" id="SSF101790">
    <property type="entry name" value="Aminomethyltransferase beta-barrel domain"/>
    <property type="match status" value="1"/>
</dbReference>
<dbReference type="SUPFAM" id="SSF103025">
    <property type="entry name" value="Folate-binding domain"/>
    <property type="match status" value="1"/>
</dbReference>
<proteinExistence type="inferred from homology"/>
<protein>
    <recommendedName>
        <fullName evidence="1">Aminomethyltransferase</fullName>
        <ecNumber evidence="1">2.1.2.10</ecNumber>
    </recommendedName>
    <alternativeName>
        <fullName evidence="1">Glycine cleavage system T protein</fullName>
    </alternativeName>
</protein>
<organism>
    <name type="scientific">Yersinia pestis (strain Pestoides F)</name>
    <dbReference type="NCBI Taxonomy" id="386656"/>
    <lineage>
        <taxon>Bacteria</taxon>
        <taxon>Pseudomonadati</taxon>
        <taxon>Pseudomonadota</taxon>
        <taxon>Gammaproteobacteria</taxon>
        <taxon>Enterobacterales</taxon>
        <taxon>Yersiniaceae</taxon>
        <taxon>Yersinia</taxon>
    </lineage>
</organism>
<feature type="chain" id="PRO_1000047733" description="Aminomethyltransferase">
    <location>
        <begin position="1"/>
        <end position="365"/>
    </location>
</feature>
<evidence type="ECO:0000255" key="1">
    <source>
        <dbReference type="HAMAP-Rule" id="MF_00259"/>
    </source>
</evidence>
<keyword id="KW-0032">Aminotransferase</keyword>
<keyword id="KW-0808">Transferase</keyword>
<accession>A4TIA5</accession>